<evidence type="ECO:0000255" key="1"/>
<evidence type="ECO:0000303" key="2">
    <source>
    </source>
</evidence>
<evidence type="ECO:0000305" key="3"/>
<evidence type="ECO:0000312" key="4">
    <source>
        <dbReference type="Araport" id="AT1G13770"/>
    </source>
</evidence>
<evidence type="ECO:0000312" key="5">
    <source>
        <dbReference type="EMBL" id="AAF81304.1"/>
    </source>
</evidence>
<evidence type="ECO:0000312" key="6">
    <source>
        <dbReference type="EMBL" id="AAO42280.1"/>
    </source>
</evidence>
<reference key="1">
    <citation type="journal article" date="2000" name="Nature">
        <title>Sequence and analysis of chromosome 1 of the plant Arabidopsis thaliana.</title>
        <authorList>
            <person name="Theologis A."/>
            <person name="Ecker J.R."/>
            <person name="Palm C.J."/>
            <person name="Federspiel N.A."/>
            <person name="Kaul S."/>
            <person name="White O."/>
            <person name="Alonso J."/>
            <person name="Altafi H."/>
            <person name="Araujo R."/>
            <person name="Bowman C.L."/>
            <person name="Brooks S.Y."/>
            <person name="Buehler E."/>
            <person name="Chan A."/>
            <person name="Chao Q."/>
            <person name="Chen H."/>
            <person name="Cheuk R.F."/>
            <person name="Chin C.W."/>
            <person name="Chung M.K."/>
            <person name="Conn L."/>
            <person name="Conway A.B."/>
            <person name="Conway A.R."/>
            <person name="Creasy T.H."/>
            <person name="Dewar K."/>
            <person name="Dunn P."/>
            <person name="Etgu P."/>
            <person name="Feldblyum T.V."/>
            <person name="Feng J.-D."/>
            <person name="Fong B."/>
            <person name="Fujii C.Y."/>
            <person name="Gill J.E."/>
            <person name="Goldsmith A.D."/>
            <person name="Haas B."/>
            <person name="Hansen N.F."/>
            <person name="Hughes B."/>
            <person name="Huizar L."/>
            <person name="Hunter J.L."/>
            <person name="Jenkins J."/>
            <person name="Johnson-Hopson C."/>
            <person name="Khan S."/>
            <person name="Khaykin E."/>
            <person name="Kim C.J."/>
            <person name="Koo H.L."/>
            <person name="Kremenetskaia I."/>
            <person name="Kurtz D.B."/>
            <person name="Kwan A."/>
            <person name="Lam B."/>
            <person name="Langin-Hooper S."/>
            <person name="Lee A."/>
            <person name="Lee J.M."/>
            <person name="Lenz C.A."/>
            <person name="Li J.H."/>
            <person name="Li Y.-P."/>
            <person name="Lin X."/>
            <person name="Liu S.X."/>
            <person name="Liu Z.A."/>
            <person name="Luros J.S."/>
            <person name="Maiti R."/>
            <person name="Marziali A."/>
            <person name="Militscher J."/>
            <person name="Miranda M."/>
            <person name="Nguyen M."/>
            <person name="Nierman W.C."/>
            <person name="Osborne B.I."/>
            <person name="Pai G."/>
            <person name="Peterson J."/>
            <person name="Pham P.K."/>
            <person name="Rizzo M."/>
            <person name="Rooney T."/>
            <person name="Rowley D."/>
            <person name="Sakano H."/>
            <person name="Salzberg S.L."/>
            <person name="Schwartz J.R."/>
            <person name="Shinn P."/>
            <person name="Southwick A.M."/>
            <person name="Sun H."/>
            <person name="Tallon L.J."/>
            <person name="Tambunga G."/>
            <person name="Toriumi M.J."/>
            <person name="Town C.D."/>
            <person name="Utterback T."/>
            <person name="Van Aken S."/>
            <person name="Vaysberg M."/>
            <person name="Vysotskaia V.S."/>
            <person name="Walker M."/>
            <person name="Wu D."/>
            <person name="Yu G."/>
            <person name="Fraser C.M."/>
            <person name="Venter J.C."/>
            <person name="Davis R.W."/>
        </authorList>
    </citation>
    <scope>NUCLEOTIDE SEQUENCE [LARGE SCALE GENOMIC DNA]</scope>
    <source>
        <strain>cv. Columbia</strain>
    </source>
</reference>
<reference key="2">
    <citation type="journal article" date="2017" name="Plant J.">
        <title>Araport11: a complete reannotation of the Arabidopsis thaliana reference genome.</title>
        <authorList>
            <person name="Cheng C.Y."/>
            <person name="Krishnakumar V."/>
            <person name="Chan A.P."/>
            <person name="Thibaud-Nissen F."/>
            <person name="Schobel S."/>
            <person name="Town C.D."/>
        </authorList>
    </citation>
    <scope>GENOME REANNOTATION</scope>
    <source>
        <strain>cv. Columbia</strain>
    </source>
</reference>
<reference key="3">
    <citation type="journal article" date="2003" name="Science">
        <title>Empirical analysis of transcriptional activity in the Arabidopsis genome.</title>
        <authorList>
            <person name="Yamada K."/>
            <person name="Lim J."/>
            <person name="Dale J.M."/>
            <person name="Chen H."/>
            <person name="Shinn P."/>
            <person name="Palm C.J."/>
            <person name="Southwick A.M."/>
            <person name="Wu H.C."/>
            <person name="Kim C.J."/>
            <person name="Nguyen M."/>
            <person name="Pham P.K."/>
            <person name="Cheuk R.F."/>
            <person name="Karlin-Newmann G."/>
            <person name="Liu S.X."/>
            <person name="Lam B."/>
            <person name="Sakano H."/>
            <person name="Wu T."/>
            <person name="Yu G."/>
            <person name="Miranda M."/>
            <person name="Quach H.L."/>
            <person name="Tripp M."/>
            <person name="Chang C.H."/>
            <person name="Lee J.M."/>
            <person name="Toriumi M.J."/>
            <person name="Chan M.M."/>
            <person name="Tang C.C."/>
            <person name="Onodera C.S."/>
            <person name="Deng J.M."/>
            <person name="Akiyama K."/>
            <person name="Ansari Y."/>
            <person name="Arakawa T."/>
            <person name="Banh J."/>
            <person name="Banno F."/>
            <person name="Bowser L."/>
            <person name="Brooks S.Y."/>
            <person name="Carninci P."/>
            <person name="Chao Q."/>
            <person name="Choy N."/>
            <person name="Enju A."/>
            <person name="Goldsmith A.D."/>
            <person name="Gurjal M."/>
            <person name="Hansen N.F."/>
            <person name="Hayashizaki Y."/>
            <person name="Johnson-Hopson C."/>
            <person name="Hsuan V.W."/>
            <person name="Iida K."/>
            <person name="Karnes M."/>
            <person name="Khan S."/>
            <person name="Koesema E."/>
            <person name="Ishida J."/>
            <person name="Jiang P.X."/>
            <person name="Jones T."/>
            <person name="Kawai J."/>
            <person name="Kamiya A."/>
            <person name="Meyers C."/>
            <person name="Nakajima M."/>
            <person name="Narusaka M."/>
            <person name="Seki M."/>
            <person name="Sakurai T."/>
            <person name="Satou M."/>
            <person name="Tamse R."/>
            <person name="Vaysberg M."/>
            <person name="Wallender E.K."/>
            <person name="Wong C."/>
            <person name="Yamamura Y."/>
            <person name="Yuan S."/>
            <person name="Shinozaki K."/>
            <person name="Davis R.W."/>
            <person name="Theologis A."/>
            <person name="Ecker J.R."/>
        </authorList>
    </citation>
    <scope>NUCLEOTIDE SEQUENCE [LARGE SCALE MRNA] (ISOFORM 1)</scope>
    <source>
        <strain>cv. Columbia</strain>
    </source>
</reference>
<reference key="4">
    <citation type="journal article" date="2009" name="Plant Physiol.">
        <title>ROOT UV-B SENSITIVE2 acts with ROOT UV-B SENSITIVE1 in a root ultraviolet B-sensing pathway.</title>
        <authorList>
            <person name="Leasure C.D."/>
            <person name="Tong H."/>
            <person name="Yuen G."/>
            <person name="Hou X."/>
            <person name="Sun X."/>
            <person name="He Z.H."/>
        </authorList>
    </citation>
    <scope>GENE FAMILY</scope>
    <scope>NOMENCLATURE</scope>
    <source>
        <strain>cv. Columbia</strain>
    </source>
</reference>
<protein>
    <recommendedName>
        <fullName evidence="2">Protein root UVB sensitive 3</fullName>
    </recommendedName>
</protein>
<feature type="chain" id="PRO_0000430820" description="Protein root UVB sensitive 3">
    <location>
        <begin position="1"/>
        <end position="440"/>
    </location>
</feature>
<feature type="transmembrane region" description="Helical; Name=1" evidence="1">
    <location>
        <begin position="109"/>
        <end position="129"/>
    </location>
</feature>
<feature type="transmembrane region" description="Helical; Name=2" evidence="1">
    <location>
        <begin position="154"/>
        <end position="174"/>
    </location>
</feature>
<feature type="transmembrane region" description="Helical; Name=3" evidence="1">
    <location>
        <begin position="232"/>
        <end position="252"/>
    </location>
</feature>
<feature type="splice variant" id="VSP_057101" description="In isoform 2.">
    <location>
        <begin position="1"/>
        <end position="87"/>
    </location>
</feature>
<sequence length="440" mass="48613">MREEQVSDCGSITLEEWNGSSSTKLFKTATITASSSLSIQRSANRFNHVWRRVLQAFVPEGFPGSVTPDYVGFQLWDTLQGLSTYTKMMLSTQALLSAIGVGEKSATVIGATFQWFLRDFTGMLGGILFTFYQGSNLDSNAKMWRLVADLMNDIGMLMDLLSPLFPSAFIVVVCLGSLSRSFTGVASGATRAALTQHFALQDNAADISAKEGSQETMATMMGMSLGMLLARFTSGNPMAIWLSFLSLTVFHMYANYRAVRCLVLNSLNFERSSILLTHFIQTGQVLSPEQVSSMEGVLPLWATSLRSTNSKPLHKRVQLGVRVSSLPRLDMLQLLNGVGASSYKNAKYLLAHIKGNVSVILHKDSKPADVLKSYIHAIVLANLMEKSTSFYSEGEAWIDKHYDELLHKLRSGGWKTERLLSPSITWRANWISHTSAAKFD</sequence>
<gene>
    <name evidence="2" type="primary">RUS3</name>
    <name evidence="4" type="ordered locus">At1g13770</name>
    <name evidence="5" type="ORF">F21F23.21</name>
</gene>
<keyword id="KW-0025">Alternative splicing</keyword>
<keyword id="KW-0472">Membrane</keyword>
<keyword id="KW-1185">Reference proteome</keyword>
<keyword id="KW-0812">Transmembrane</keyword>
<keyword id="KW-1133">Transmembrane helix</keyword>
<dbReference type="EMBL" id="AC027656">
    <property type="protein sequence ID" value="AAF81304.1"/>
    <property type="status" value="ALT_SEQ"/>
    <property type="molecule type" value="Genomic_DNA"/>
</dbReference>
<dbReference type="EMBL" id="CP002684">
    <property type="protein sequence ID" value="AEE29066.1"/>
    <property type="molecule type" value="Genomic_DNA"/>
</dbReference>
<dbReference type="EMBL" id="CP002684">
    <property type="protein sequence ID" value="AEE29067.1"/>
    <property type="molecule type" value="Genomic_DNA"/>
</dbReference>
<dbReference type="EMBL" id="BT004280">
    <property type="protein sequence ID" value="AAO42280.1"/>
    <property type="molecule type" value="mRNA"/>
</dbReference>
<dbReference type="EMBL" id="BT005607">
    <property type="protein sequence ID" value="AAO64027.1"/>
    <property type="molecule type" value="mRNA"/>
</dbReference>
<dbReference type="PIR" id="C86271">
    <property type="entry name" value="C86271"/>
</dbReference>
<dbReference type="RefSeq" id="NP_001117280.1">
    <molecule id="Q84JB8-2"/>
    <property type="nucleotide sequence ID" value="NM_001123808.2"/>
</dbReference>
<dbReference type="RefSeq" id="NP_172832.3">
    <molecule id="Q84JB8-1"/>
    <property type="nucleotide sequence ID" value="NM_101245.5"/>
</dbReference>
<dbReference type="BioGRID" id="23177">
    <property type="interactions" value="25"/>
</dbReference>
<dbReference type="FunCoup" id="Q84JB8">
    <property type="interactions" value="2265"/>
</dbReference>
<dbReference type="IntAct" id="Q84JB8">
    <property type="interactions" value="26"/>
</dbReference>
<dbReference type="STRING" id="3702.Q84JB8"/>
<dbReference type="PaxDb" id="3702-AT1G13770.1"/>
<dbReference type="ProteomicsDB" id="226574">
    <molecule id="Q84JB8-1"/>
</dbReference>
<dbReference type="DNASU" id="837937"/>
<dbReference type="EnsemblPlants" id="AT1G13770.1">
    <molecule id="Q84JB8-1"/>
    <property type="protein sequence ID" value="AT1G13770.1"/>
    <property type="gene ID" value="AT1G13770"/>
</dbReference>
<dbReference type="EnsemblPlants" id="AT1G13770.2">
    <molecule id="Q84JB8-2"/>
    <property type="protein sequence ID" value="AT1G13770.2"/>
    <property type="gene ID" value="AT1G13770"/>
</dbReference>
<dbReference type="GeneID" id="837937"/>
<dbReference type="Gramene" id="AT1G13770.1">
    <molecule id="Q84JB8-1"/>
    <property type="protein sequence ID" value="AT1G13770.1"/>
    <property type="gene ID" value="AT1G13770"/>
</dbReference>
<dbReference type="Gramene" id="AT1G13770.2">
    <molecule id="Q84JB8-2"/>
    <property type="protein sequence ID" value="AT1G13770.2"/>
    <property type="gene ID" value="AT1G13770"/>
</dbReference>
<dbReference type="KEGG" id="ath:AT1G13770"/>
<dbReference type="Araport" id="AT1G13770"/>
<dbReference type="TAIR" id="AT1G13770">
    <property type="gene designation" value="RUS3"/>
</dbReference>
<dbReference type="eggNOG" id="KOG4249">
    <property type="taxonomic scope" value="Eukaryota"/>
</dbReference>
<dbReference type="InParanoid" id="Q84JB8"/>
<dbReference type="OMA" id="VAVQWII"/>
<dbReference type="PhylomeDB" id="Q84JB8"/>
<dbReference type="PRO" id="PR:Q84JB8"/>
<dbReference type="Proteomes" id="UP000006548">
    <property type="component" value="Chromosome 1"/>
</dbReference>
<dbReference type="ExpressionAtlas" id="Q84JB8">
    <property type="expression patterns" value="baseline and differential"/>
</dbReference>
<dbReference type="GO" id="GO:0016020">
    <property type="term" value="C:membrane"/>
    <property type="evidence" value="ECO:0007669"/>
    <property type="project" value="UniProtKB-SubCell"/>
</dbReference>
<dbReference type="InterPro" id="IPR006968">
    <property type="entry name" value="RUS_fam"/>
</dbReference>
<dbReference type="InterPro" id="IPR055412">
    <property type="entry name" value="UVB_sens_C"/>
</dbReference>
<dbReference type="InterPro" id="IPR054549">
    <property type="entry name" value="UVB_sens_RUS_dom"/>
</dbReference>
<dbReference type="PANTHER" id="PTHR12770:SF31">
    <property type="entry name" value="RUS FAMILY MEMBER 1"/>
    <property type="match status" value="1"/>
</dbReference>
<dbReference type="PANTHER" id="PTHR12770">
    <property type="entry name" value="RUS1 FAMILY PROTEIN C16ORF58"/>
    <property type="match status" value="1"/>
</dbReference>
<dbReference type="Pfam" id="PF24160">
    <property type="entry name" value="UVB_sens_C"/>
    <property type="match status" value="1"/>
</dbReference>
<dbReference type="Pfam" id="PF04884">
    <property type="entry name" value="UVB_sens_prot"/>
    <property type="match status" value="1"/>
</dbReference>
<organism evidence="6">
    <name type="scientific">Arabidopsis thaliana</name>
    <name type="common">Mouse-ear cress</name>
    <dbReference type="NCBI Taxonomy" id="3702"/>
    <lineage>
        <taxon>Eukaryota</taxon>
        <taxon>Viridiplantae</taxon>
        <taxon>Streptophyta</taxon>
        <taxon>Embryophyta</taxon>
        <taxon>Tracheophyta</taxon>
        <taxon>Spermatophyta</taxon>
        <taxon>Magnoliopsida</taxon>
        <taxon>eudicotyledons</taxon>
        <taxon>Gunneridae</taxon>
        <taxon>Pentapetalae</taxon>
        <taxon>rosids</taxon>
        <taxon>malvids</taxon>
        <taxon>Brassicales</taxon>
        <taxon>Brassicaceae</taxon>
        <taxon>Camelineae</taxon>
        <taxon>Arabidopsis</taxon>
    </lineage>
</organism>
<comment type="subcellular location">
    <subcellularLocation>
        <location evidence="1">Membrane</location>
        <topology evidence="1">Multi-pass membrane protein</topology>
    </subcellularLocation>
</comment>
<comment type="alternative products">
    <event type="alternative splicing"/>
    <isoform>
        <id>Q84JB8-1</id>
        <name>1</name>
        <sequence type="displayed"/>
    </isoform>
    <isoform>
        <id>Q84JB8-2</id>
        <name>2</name>
        <sequence type="described" ref="VSP_057101"/>
    </isoform>
</comment>
<comment type="similarity">
    <text evidence="3">Belongs to the RUS1 family.</text>
</comment>
<comment type="sequence caution" evidence="3">
    <conflict type="erroneous gene model prediction">
        <sequence resource="EMBL-CDS" id="AAF81304"/>
    </conflict>
</comment>
<proteinExistence type="evidence at transcript level"/>
<name>RUS3_ARATH</name>
<accession>Q84JB8</accession>
<accession>B3H4U4</accession>
<accession>Q9LMX1</accession>